<organism>
    <name type="scientific">Ralstonia nicotianae (strain ATCC BAA-1114 / GMI1000)</name>
    <name type="common">Ralstonia solanacearum</name>
    <dbReference type="NCBI Taxonomy" id="267608"/>
    <lineage>
        <taxon>Bacteria</taxon>
        <taxon>Pseudomonadati</taxon>
        <taxon>Pseudomonadota</taxon>
        <taxon>Betaproteobacteria</taxon>
        <taxon>Burkholderiales</taxon>
        <taxon>Burkholderiaceae</taxon>
        <taxon>Ralstonia</taxon>
        <taxon>Ralstonia solanacearum species complex</taxon>
    </lineage>
</organism>
<feature type="chain" id="PRO_0000238336" description="ATP synthase subunit alpha">
    <location>
        <begin position="1"/>
        <end position="513"/>
    </location>
</feature>
<feature type="binding site" evidence="1">
    <location>
        <begin position="169"/>
        <end position="176"/>
    </location>
    <ligand>
        <name>ATP</name>
        <dbReference type="ChEBI" id="CHEBI:30616"/>
    </ligand>
</feature>
<feature type="site" description="Required for activity" evidence="1">
    <location>
        <position position="373"/>
    </location>
</feature>
<proteinExistence type="inferred from homology"/>
<accession>Q8XU74</accession>
<keyword id="KW-0066">ATP synthesis</keyword>
<keyword id="KW-0067">ATP-binding</keyword>
<keyword id="KW-0997">Cell inner membrane</keyword>
<keyword id="KW-1003">Cell membrane</keyword>
<keyword id="KW-0139">CF(1)</keyword>
<keyword id="KW-0375">Hydrogen ion transport</keyword>
<keyword id="KW-0406">Ion transport</keyword>
<keyword id="KW-0472">Membrane</keyword>
<keyword id="KW-0547">Nucleotide-binding</keyword>
<keyword id="KW-1185">Reference proteome</keyword>
<keyword id="KW-1278">Translocase</keyword>
<keyword id="KW-0813">Transport</keyword>
<sequence>MQLNPSEISDLIKTRIEGLKAGADAKNTGTVISVTDGICRIHGLSGVMQGEMLEFPGNTFGLALNLERDSVGAVVLGDYEHISEGNEVKCTGRILEVPVGPELLGRVVNALGQPIDGKGPINAKKTDVIEKVAPGVIARQSVSQPVQTGLKSIDAMVPIGRGQRELIIGDRQTGKTAVAVDAIINQKGKGIFCVYVAIGQKASTIANVVRKLEEHGALEYTIVVAAAASDSAAMQYLSAYAGCTMGEYFRDRGEDALIVYDDLTKQAWAYRQVSLLLRRPPGREAYPGDVFYLHSRLLERAARVNAEHIEKITNGEVKGKTGSLTALPVIETQAGDVSAFVPTNVISITDGQIFLETDLFNAGIRPAINAGISVSRVGGAAQTKVVKKLSGGIRTDLAQYRELAAFAQFASDLDEATRKQLERGRRVTELLKQPQYQPLQVWQLAASLYAANNGFLDNVDVKDILAFEKGLHDQLKTKYADLINRIEDTKDLSKDDEAALRAAIEDFKKSAAF</sequence>
<evidence type="ECO:0000255" key="1">
    <source>
        <dbReference type="HAMAP-Rule" id="MF_01346"/>
    </source>
</evidence>
<protein>
    <recommendedName>
        <fullName evidence="1">ATP synthase subunit alpha</fullName>
        <ecNumber evidence="1">7.1.2.2</ecNumber>
    </recommendedName>
    <alternativeName>
        <fullName evidence="1">ATP synthase F1 sector subunit alpha</fullName>
    </alternativeName>
    <alternativeName>
        <fullName evidence="1">F-ATPase subunit alpha</fullName>
    </alternativeName>
</protein>
<gene>
    <name evidence="1" type="primary">atpA</name>
    <name type="ordered locus">RSc3319</name>
    <name type="ORF">RS02549</name>
</gene>
<name>ATPA_RALN1</name>
<reference key="1">
    <citation type="journal article" date="2002" name="Nature">
        <title>Genome sequence of the plant pathogen Ralstonia solanacearum.</title>
        <authorList>
            <person name="Salanoubat M."/>
            <person name="Genin S."/>
            <person name="Artiguenave F."/>
            <person name="Gouzy J."/>
            <person name="Mangenot S."/>
            <person name="Arlat M."/>
            <person name="Billault A."/>
            <person name="Brottier P."/>
            <person name="Camus J.-C."/>
            <person name="Cattolico L."/>
            <person name="Chandler M."/>
            <person name="Choisne N."/>
            <person name="Claudel-Renard C."/>
            <person name="Cunnac S."/>
            <person name="Demange N."/>
            <person name="Gaspin C."/>
            <person name="Lavie M."/>
            <person name="Moisan A."/>
            <person name="Robert C."/>
            <person name="Saurin W."/>
            <person name="Schiex T."/>
            <person name="Siguier P."/>
            <person name="Thebault P."/>
            <person name="Whalen M."/>
            <person name="Wincker P."/>
            <person name="Levy M."/>
            <person name="Weissenbach J."/>
            <person name="Boucher C.A."/>
        </authorList>
    </citation>
    <scope>NUCLEOTIDE SEQUENCE [LARGE SCALE GENOMIC DNA]</scope>
    <source>
        <strain>ATCC BAA-1114 / GMI1000</strain>
    </source>
</reference>
<dbReference type="EC" id="7.1.2.2" evidence="1"/>
<dbReference type="EMBL" id="AL646052">
    <property type="protein sequence ID" value="CAD17107.1"/>
    <property type="molecule type" value="Genomic_DNA"/>
</dbReference>
<dbReference type="RefSeq" id="WP_011003203.1">
    <property type="nucleotide sequence ID" value="NC_003295.1"/>
</dbReference>
<dbReference type="SMR" id="Q8XU74"/>
<dbReference type="STRING" id="267608.RSc3319"/>
<dbReference type="EnsemblBacteria" id="CAD17107">
    <property type="protein sequence ID" value="CAD17107"/>
    <property type="gene ID" value="RSc3319"/>
</dbReference>
<dbReference type="KEGG" id="rso:RSc3319"/>
<dbReference type="eggNOG" id="COG0056">
    <property type="taxonomic scope" value="Bacteria"/>
</dbReference>
<dbReference type="HOGENOM" id="CLU_010091_2_1_4"/>
<dbReference type="Proteomes" id="UP000001436">
    <property type="component" value="Chromosome"/>
</dbReference>
<dbReference type="GO" id="GO:0005886">
    <property type="term" value="C:plasma membrane"/>
    <property type="evidence" value="ECO:0007669"/>
    <property type="project" value="UniProtKB-SubCell"/>
</dbReference>
<dbReference type="GO" id="GO:0045259">
    <property type="term" value="C:proton-transporting ATP synthase complex"/>
    <property type="evidence" value="ECO:0007669"/>
    <property type="project" value="UniProtKB-KW"/>
</dbReference>
<dbReference type="GO" id="GO:0043531">
    <property type="term" value="F:ADP binding"/>
    <property type="evidence" value="ECO:0007669"/>
    <property type="project" value="TreeGrafter"/>
</dbReference>
<dbReference type="GO" id="GO:0005524">
    <property type="term" value="F:ATP binding"/>
    <property type="evidence" value="ECO:0007669"/>
    <property type="project" value="UniProtKB-UniRule"/>
</dbReference>
<dbReference type="GO" id="GO:0046933">
    <property type="term" value="F:proton-transporting ATP synthase activity, rotational mechanism"/>
    <property type="evidence" value="ECO:0007669"/>
    <property type="project" value="UniProtKB-UniRule"/>
</dbReference>
<dbReference type="CDD" id="cd18113">
    <property type="entry name" value="ATP-synt_F1_alpha_C"/>
    <property type="match status" value="1"/>
</dbReference>
<dbReference type="CDD" id="cd18116">
    <property type="entry name" value="ATP-synt_F1_alpha_N"/>
    <property type="match status" value="1"/>
</dbReference>
<dbReference type="CDD" id="cd01132">
    <property type="entry name" value="F1-ATPase_alpha_CD"/>
    <property type="match status" value="1"/>
</dbReference>
<dbReference type="FunFam" id="1.20.150.20:FF:000001">
    <property type="entry name" value="ATP synthase subunit alpha"/>
    <property type="match status" value="1"/>
</dbReference>
<dbReference type="FunFam" id="2.40.30.20:FF:000001">
    <property type="entry name" value="ATP synthase subunit alpha"/>
    <property type="match status" value="1"/>
</dbReference>
<dbReference type="FunFam" id="3.40.50.300:FF:000002">
    <property type="entry name" value="ATP synthase subunit alpha"/>
    <property type="match status" value="1"/>
</dbReference>
<dbReference type="Gene3D" id="2.40.30.20">
    <property type="match status" value="1"/>
</dbReference>
<dbReference type="Gene3D" id="1.20.150.20">
    <property type="entry name" value="ATP synthase alpha/beta chain, C-terminal domain"/>
    <property type="match status" value="1"/>
</dbReference>
<dbReference type="Gene3D" id="3.40.50.300">
    <property type="entry name" value="P-loop containing nucleotide triphosphate hydrolases"/>
    <property type="match status" value="1"/>
</dbReference>
<dbReference type="HAMAP" id="MF_01346">
    <property type="entry name" value="ATP_synth_alpha_bact"/>
    <property type="match status" value="1"/>
</dbReference>
<dbReference type="InterPro" id="IPR023366">
    <property type="entry name" value="ATP_synth_asu-like_sf"/>
</dbReference>
<dbReference type="InterPro" id="IPR000793">
    <property type="entry name" value="ATP_synth_asu_C"/>
</dbReference>
<dbReference type="InterPro" id="IPR038376">
    <property type="entry name" value="ATP_synth_asu_C_sf"/>
</dbReference>
<dbReference type="InterPro" id="IPR033732">
    <property type="entry name" value="ATP_synth_F1_a_nt-bd_dom"/>
</dbReference>
<dbReference type="InterPro" id="IPR005294">
    <property type="entry name" value="ATP_synth_F1_asu"/>
</dbReference>
<dbReference type="InterPro" id="IPR020003">
    <property type="entry name" value="ATPase_a/bsu_AS"/>
</dbReference>
<dbReference type="InterPro" id="IPR004100">
    <property type="entry name" value="ATPase_F1/V1/A1_a/bsu_N"/>
</dbReference>
<dbReference type="InterPro" id="IPR036121">
    <property type="entry name" value="ATPase_F1/V1/A1_a/bsu_N_sf"/>
</dbReference>
<dbReference type="InterPro" id="IPR000194">
    <property type="entry name" value="ATPase_F1/V1/A1_a/bsu_nucl-bd"/>
</dbReference>
<dbReference type="InterPro" id="IPR027417">
    <property type="entry name" value="P-loop_NTPase"/>
</dbReference>
<dbReference type="NCBIfam" id="TIGR00962">
    <property type="entry name" value="atpA"/>
    <property type="match status" value="1"/>
</dbReference>
<dbReference type="NCBIfam" id="NF009884">
    <property type="entry name" value="PRK13343.1"/>
    <property type="match status" value="1"/>
</dbReference>
<dbReference type="PANTHER" id="PTHR48082">
    <property type="entry name" value="ATP SYNTHASE SUBUNIT ALPHA, MITOCHONDRIAL"/>
    <property type="match status" value="1"/>
</dbReference>
<dbReference type="PANTHER" id="PTHR48082:SF2">
    <property type="entry name" value="ATP SYNTHASE SUBUNIT ALPHA, MITOCHONDRIAL"/>
    <property type="match status" value="1"/>
</dbReference>
<dbReference type="Pfam" id="PF00006">
    <property type="entry name" value="ATP-synt_ab"/>
    <property type="match status" value="1"/>
</dbReference>
<dbReference type="Pfam" id="PF00306">
    <property type="entry name" value="ATP-synt_ab_C"/>
    <property type="match status" value="1"/>
</dbReference>
<dbReference type="Pfam" id="PF02874">
    <property type="entry name" value="ATP-synt_ab_N"/>
    <property type="match status" value="1"/>
</dbReference>
<dbReference type="PIRSF" id="PIRSF039088">
    <property type="entry name" value="F_ATPase_subunit_alpha"/>
    <property type="match status" value="1"/>
</dbReference>
<dbReference type="SUPFAM" id="SSF47917">
    <property type="entry name" value="C-terminal domain of alpha and beta subunits of F1 ATP synthase"/>
    <property type="match status" value="1"/>
</dbReference>
<dbReference type="SUPFAM" id="SSF50615">
    <property type="entry name" value="N-terminal domain of alpha and beta subunits of F1 ATP synthase"/>
    <property type="match status" value="1"/>
</dbReference>
<dbReference type="SUPFAM" id="SSF52540">
    <property type="entry name" value="P-loop containing nucleoside triphosphate hydrolases"/>
    <property type="match status" value="1"/>
</dbReference>
<dbReference type="PROSITE" id="PS00152">
    <property type="entry name" value="ATPASE_ALPHA_BETA"/>
    <property type="match status" value="1"/>
</dbReference>
<comment type="function">
    <text evidence="1">Produces ATP from ADP in the presence of a proton gradient across the membrane. The alpha chain is a regulatory subunit.</text>
</comment>
<comment type="catalytic activity">
    <reaction evidence="1">
        <text>ATP + H2O + 4 H(+)(in) = ADP + phosphate + 5 H(+)(out)</text>
        <dbReference type="Rhea" id="RHEA:57720"/>
        <dbReference type="ChEBI" id="CHEBI:15377"/>
        <dbReference type="ChEBI" id="CHEBI:15378"/>
        <dbReference type="ChEBI" id="CHEBI:30616"/>
        <dbReference type="ChEBI" id="CHEBI:43474"/>
        <dbReference type="ChEBI" id="CHEBI:456216"/>
        <dbReference type="EC" id="7.1.2.2"/>
    </reaction>
</comment>
<comment type="subunit">
    <text evidence="1">F-type ATPases have 2 components, CF(1) - the catalytic core - and CF(0) - the membrane proton channel. CF(1) has five subunits: alpha(3), beta(3), gamma(1), delta(1), epsilon(1). CF(0) has three main subunits: a(1), b(2) and c(9-12). The alpha and beta chains form an alternating ring which encloses part of the gamma chain. CF(1) is attached to CF(0) by a central stalk formed by the gamma and epsilon chains, while a peripheral stalk is formed by the delta and b chains.</text>
</comment>
<comment type="subcellular location">
    <subcellularLocation>
        <location evidence="1">Cell inner membrane</location>
        <topology evidence="1">Peripheral membrane protein</topology>
    </subcellularLocation>
</comment>
<comment type="similarity">
    <text evidence="1">Belongs to the ATPase alpha/beta chains family.</text>
</comment>